<organism>
    <name type="scientific">Dehalococcoides mccartyi (strain ATCC BAA-2266 / KCTC 15142 / 195)</name>
    <name type="common">Dehalococcoides ethenogenes (strain 195)</name>
    <dbReference type="NCBI Taxonomy" id="243164"/>
    <lineage>
        <taxon>Bacteria</taxon>
        <taxon>Bacillati</taxon>
        <taxon>Chloroflexota</taxon>
        <taxon>Dehalococcoidia</taxon>
        <taxon>Dehalococcoidales</taxon>
        <taxon>Dehalococcoidaceae</taxon>
        <taxon>Dehalococcoides</taxon>
    </lineage>
</organism>
<protein>
    <recommendedName>
        <fullName evidence="1">ATP synthase subunit beta</fullName>
        <ecNumber evidence="1">7.1.2.2</ecNumber>
    </recommendedName>
    <alternativeName>
        <fullName evidence="1">ATP synthase F1 sector subunit beta</fullName>
    </alternativeName>
    <alternativeName>
        <fullName evidence="1">F-ATPase subunit beta</fullName>
    </alternativeName>
</protein>
<accession>Q3Z8Z2</accession>
<name>ATPB_DEHM1</name>
<keyword id="KW-0066">ATP synthesis</keyword>
<keyword id="KW-0067">ATP-binding</keyword>
<keyword id="KW-1003">Cell membrane</keyword>
<keyword id="KW-0139">CF(1)</keyword>
<keyword id="KW-0375">Hydrogen ion transport</keyword>
<keyword id="KW-0406">Ion transport</keyword>
<keyword id="KW-0472">Membrane</keyword>
<keyword id="KW-0547">Nucleotide-binding</keyword>
<keyword id="KW-1278">Translocase</keyword>
<keyword id="KW-0813">Transport</keyword>
<gene>
    <name evidence="1" type="primary">atpD</name>
    <name type="ordered locus">DET0564</name>
</gene>
<proteinExistence type="inferred from homology"/>
<reference key="1">
    <citation type="journal article" date="2005" name="Science">
        <title>Genome sequence of the PCE-dechlorinating bacterium Dehalococcoides ethenogenes.</title>
        <authorList>
            <person name="Seshadri R."/>
            <person name="Adrian L."/>
            <person name="Fouts D.E."/>
            <person name="Eisen J.A."/>
            <person name="Phillippy A.M."/>
            <person name="Methe B.A."/>
            <person name="Ward N.L."/>
            <person name="Nelson W.C."/>
            <person name="DeBoy R.T."/>
            <person name="Khouri H.M."/>
            <person name="Kolonay J.F."/>
            <person name="Dodson R.J."/>
            <person name="Daugherty S.C."/>
            <person name="Brinkac L.M."/>
            <person name="Sullivan S.A."/>
            <person name="Madupu R."/>
            <person name="Nelson K.E."/>
            <person name="Kang K.H."/>
            <person name="Impraim M."/>
            <person name="Tran K."/>
            <person name="Robinson J.M."/>
            <person name="Forberger H.A."/>
            <person name="Fraser C.M."/>
            <person name="Zinder S.H."/>
            <person name="Heidelberg J.F."/>
        </authorList>
    </citation>
    <scope>NUCLEOTIDE SEQUENCE [LARGE SCALE GENOMIC DNA]</scope>
    <source>
        <strain>ATCC BAA-2266 / KCTC 15142 / 195</strain>
    </source>
</reference>
<dbReference type="EC" id="7.1.2.2" evidence="1"/>
<dbReference type="EMBL" id="CP000027">
    <property type="protein sequence ID" value="AAW40172.1"/>
    <property type="molecule type" value="Genomic_DNA"/>
</dbReference>
<dbReference type="RefSeq" id="WP_010936340.1">
    <property type="nucleotide sequence ID" value="NC_002936.3"/>
</dbReference>
<dbReference type="SMR" id="Q3Z8Z2"/>
<dbReference type="FunCoup" id="Q3Z8Z2">
    <property type="interactions" value="242"/>
</dbReference>
<dbReference type="STRING" id="243164.DET0564"/>
<dbReference type="GeneID" id="3230136"/>
<dbReference type="KEGG" id="det:DET0564"/>
<dbReference type="eggNOG" id="COG0055">
    <property type="taxonomic scope" value="Bacteria"/>
</dbReference>
<dbReference type="HOGENOM" id="CLU_022398_0_2_0"/>
<dbReference type="InParanoid" id="Q3Z8Z2"/>
<dbReference type="Proteomes" id="UP000008289">
    <property type="component" value="Chromosome"/>
</dbReference>
<dbReference type="GO" id="GO:0005886">
    <property type="term" value="C:plasma membrane"/>
    <property type="evidence" value="ECO:0007669"/>
    <property type="project" value="UniProtKB-SubCell"/>
</dbReference>
<dbReference type="GO" id="GO:0045259">
    <property type="term" value="C:proton-transporting ATP synthase complex"/>
    <property type="evidence" value="ECO:0007669"/>
    <property type="project" value="UniProtKB-KW"/>
</dbReference>
<dbReference type="GO" id="GO:0005524">
    <property type="term" value="F:ATP binding"/>
    <property type="evidence" value="ECO:0007669"/>
    <property type="project" value="UniProtKB-UniRule"/>
</dbReference>
<dbReference type="GO" id="GO:0016887">
    <property type="term" value="F:ATP hydrolysis activity"/>
    <property type="evidence" value="ECO:0007669"/>
    <property type="project" value="InterPro"/>
</dbReference>
<dbReference type="GO" id="GO:0046933">
    <property type="term" value="F:proton-transporting ATP synthase activity, rotational mechanism"/>
    <property type="evidence" value="ECO:0007669"/>
    <property type="project" value="UniProtKB-UniRule"/>
</dbReference>
<dbReference type="CDD" id="cd18110">
    <property type="entry name" value="ATP-synt_F1_beta_C"/>
    <property type="match status" value="1"/>
</dbReference>
<dbReference type="CDD" id="cd18115">
    <property type="entry name" value="ATP-synt_F1_beta_N"/>
    <property type="match status" value="1"/>
</dbReference>
<dbReference type="CDD" id="cd01133">
    <property type="entry name" value="F1-ATPase_beta_CD"/>
    <property type="match status" value="1"/>
</dbReference>
<dbReference type="FunFam" id="1.10.1140.10:FF:000001">
    <property type="entry name" value="ATP synthase subunit beta"/>
    <property type="match status" value="1"/>
</dbReference>
<dbReference type="FunFam" id="3.40.50.300:FF:001630">
    <property type="entry name" value="ATP synthase subunit beta"/>
    <property type="match status" value="1"/>
</dbReference>
<dbReference type="Gene3D" id="2.40.10.170">
    <property type="match status" value="1"/>
</dbReference>
<dbReference type="Gene3D" id="1.10.1140.10">
    <property type="entry name" value="Bovine Mitochondrial F1-atpase, Atp Synthase Beta Chain, Chain D, domain 3"/>
    <property type="match status" value="1"/>
</dbReference>
<dbReference type="Gene3D" id="3.40.50.300">
    <property type="entry name" value="P-loop containing nucleotide triphosphate hydrolases"/>
    <property type="match status" value="1"/>
</dbReference>
<dbReference type="HAMAP" id="MF_01347">
    <property type="entry name" value="ATP_synth_beta_bact"/>
    <property type="match status" value="1"/>
</dbReference>
<dbReference type="InterPro" id="IPR003593">
    <property type="entry name" value="AAA+_ATPase"/>
</dbReference>
<dbReference type="InterPro" id="IPR055190">
    <property type="entry name" value="ATP-synt_VA_C"/>
</dbReference>
<dbReference type="InterPro" id="IPR005722">
    <property type="entry name" value="ATP_synth_F1_bsu"/>
</dbReference>
<dbReference type="InterPro" id="IPR020003">
    <property type="entry name" value="ATPase_a/bsu_AS"/>
</dbReference>
<dbReference type="InterPro" id="IPR050053">
    <property type="entry name" value="ATPase_alpha/beta_chains"/>
</dbReference>
<dbReference type="InterPro" id="IPR004100">
    <property type="entry name" value="ATPase_F1/V1/A1_a/bsu_N"/>
</dbReference>
<dbReference type="InterPro" id="IPR036121">
    <property type="entry name" value="ATPase_F1/V1/A1_a/bsu_N_sf"/>
</dbReference>
<dbReference type="InterPro" id="IPR000194">
    <property type="entry name" value="ATPase_F1/V1/A1_a/bsu_nucl-bd"/>
</dbReference>
<dbReference type="InterPro" id="IPR024034">
    <property type="entry name" value="ATPase_F1/V1_b/a_C"/>
</dbReference>
<dbReference type="InterPro" id="IPR027417">
    <property type="entry name" value="P-loop_NTPase"/>
</dbReference>
<dbReference type="NCBIfam" id="TIGR01039">
    <property type="entry name" value="atpD"/>
    <property type="match status" value="1"/>
</dbReference>
<dbReference type="PANTHER" id="PTHR15184">
    <property type="entry name" value="ATP SYNTHASE"/>
    <property type="match status" value="1"/>
</dbReference>
<dbReference type="PANTHER" id="PTHR15184:SF71">
    <property type="entry name" value="ATP SYNTHASE SUBUNIT BETA, MITOCHONDRIAL"/>
    <property type="match status" value="1"/>
</dbReference>
<dbReference type="Pfam" id="PF00006">
    <property type="entry name" value="ATP-synt_ab"/>
    <property type="match status" value="1"/>
</dbReference>
<dbReference type="Pfam" id="PF02874">
    <property type="entry name" value="ATP-synt_ab_N"/>
    <property type="match status" value="1"/>
</dbReference>
<dbReference type="Pfam" id="PF22919">
    <property type="entry name" value="ATP-synt_VA_C"/>
    <property type="match status" value="1"/>
</dbReference>
<dbReference type="SMART" id="SM00382">
    <property type="entry name" value="AAA"/>
    <property type="match status" value="1"/>
</dbReference>
<dbReference type="SUPFAM" id="SSF47917">
    <property type="entry name" value="C-terminal domain of alpha and beta subunits of F1 ATP synthase"/>
    <property type="match status" value="1"/>
</dbReference>
<dbReference type="SUPFAM" id="SSF50615">
    <property type="entry name" value="N-terminal domain of alpha and beta subunits of F1 ATP synthase"/>
    <property type="match status" value="1"/>
</dbReference>
<dbReference type="SUPFAM" id="SSF52540">
    <property type="entry name" value="P-loop containing nucleoside triphosphate hydrolases"/>
    <property type="match status" value="1"/>
</dbReference>
<dbReference type="PROSITE" id="PS00152">
    <property type="entry name" value="ATPASE_ALPHA_BETA"/>
    <property type="match status" value="1"/>
</dbReference>
<comment type="function">
    <text evidence="1">Produces ATP from ADP in the presence of a proton gradient across the membrane. The catalytic sites are hosted primarily by the beta subunits.</text>
</comment>
<comment type="catalytic activity">
    <reaction evidence="1">
        <text>ATP + H2O + 4 H(+)(in) = ADP + phosphate + 5 H(+)(out)</text>
        <dbReference type="Rhea" id="RHEA:57720"/>
        <dbReference type="ChEBI" id="CHEBI:15377"/>
        <dbReference type="ChEBI" id="CHEBI:15378"/>
        <dbReference type="ChEBI" id="CHEBI:30616"/>
        <dbReference type="ChEBI" id="CHEBI:43474"/>
        <dbReference type="ChEBI" id="CHEBI:456216"/>
        <dbReference type="EC" id="7.1.2.2"/>
    </reaction>
</comment>
<comment type="subunit">
    <text evidence="1">F-type ATPases have 2 components, CF(1) - the catalytic core - and CF(0) - the membrane proton channel. CF(1) has five subunits: alpha(3), beta(3), gamma(1), delta(1), epsilon(1). CF(0) has three main subunits: a(1), b(2) and c(9-12). The alpha and beta chains form an alternating ring which encloses part of the gamma chain. CF(1) is attached to CF(0) by a central stalk formed by the gamma and epsilon chains, while a peripheral stalk is formed by the delta and b chains.</text>
</comment>
<comment type="subcellular location">
    <subcellularLocation>
        <location evidence="1">Cell membrane</location>
        <topology evidence="1">Peripheral membrane protein</topology>
    </subcellularLocation>
</comment>
<comment type="similarity">
    <text evidence="1">Belongs to the ATPase alpha/beta chains family.</text>
</comment>
<feature type="chain" id="PRO_0000254249" description="ATP synthase subunit beta">
    <location>
        <begin position="1"/>
        <end position="464"/>
    </location>
</feature>
<feature type="binding site" evidence="1">
    <location>
        <begin position="150"/>
        <end position="157"/>
    </location>
    <ligand>
        <name>ATP</name>
        <dbReference type="ChEBI" id="CHEBI:30616"/>
    </ligand>
</feature>
<sequence>MANGKVIQVIGSVVDVEFSADSMPALFNALEIPRDNGKMVLEVQSHVGNNRVKCLSFTPTDGLERGAEVIDTKRPLSVPVGRNTLGRIFNVLGEPLDNRGDVKAEKTMPIHRSAPAMDELESSAQVLETGLKVIDLIAPFARGGKIGALGGAGVGKTVLIQELIRNIATEHEGFSVFAGVGERSREGNDLWHEMEDSGVLPKTTMVFGQMNELPAVRLRIALTGLTMAEYFRDEERQDVLLFIDNIYRYTLAGMEVSALLGRMPSAVGYQPTLATEMGALQERIASTKQGSITSFQAVYVPADDYTDPGVVATFGHLDAMIALERSLAEQALYPAVDPLASNSRILDPQVVGEEHYQVARDVQKVLQRYKDLQDVIAILGMEELSEEDKLTVARARRIQRFLTQPMFVSEVFTGRPGQYVSLAETIRGFKEILEGKHDSLPEQAFYMVGTIDDAVAEAKKLSAA</sequence>
<evidence type="ECO:0000255" key="1">
    <source>
        <dbReference type="HAMAP-Rule" id="MF_01347"/>
    </source>
</evidence>